<proteinExistence type="inferred from homology"/>
<sequence length="314" mass="35963">MKNKSMEIEFILLGLTDDPQLQIVIFLFLFLNYTLSLMGNLIIIILTLLDPRLKTPMYFFLRNFSFLEVIFTTVCIPRFLITIVTRDKTISYNNCATQLFFILLPGVTEFYLLAAMSYDRYVAICKPLHYPIIMSSKVCYQLVLSSWVTGFLIIFPPLVMGLKLDFCASKTIDHFMCETSPILQISCTDTHVLELMSFTLAVVTLVVTLVLVILSYTCIIKTILKFSSAQQRNKAFSTCTSHMIVVSMTYGSCIFMYIKPSAKERVTVSKGVALLYTSIAPLLNPFIYTLRNQQVKEVFWDVLQKNLCFSKRPF</sequence>
<name>OR6C6_HUMAN</name>
<dbReference type="EMBL" id="AC122684">
    <property type="status" value="NOT_ANNOTATED_CDS"/>
    <property type="molecule type" value="Genomic_DNA"/>
</dbReference>
<dbReference type="CCDS" id="CCDS31817.1"/>
<dbReference type="RefSeq" id="NP_001005493.1">
    <property type="nucleotide sequence ID" value="NM_001005493.2"/>
</dbReference>
<dbReference type="SMR" id="A6NF89"/>
<dbReference type="BioGRID" id="129538">
    <property type="interactions" value="1"/>
</dbReference>
<dbReference type="FunCoup" id="A6NF89">
    <property type="interactions" value="416"/>
</dbReference>
<dbReference type="STRING" id="9606.ENSP00000351211"/>
<dbReference type="GlyCosmos" id="A6NF89">
    <property type="glycosylation" value="1 site, No reported glycans"/>
</dbReference>
<dbReference type="GlyGen" id="A6NF89">
    <property type="glycosylation" value="1 site"/>
</dbReference>
<dbReference type="iPTMnet" id="A6NF89"/>
<dbReference type="PhosphoSitePlus" id="A6NF89"/>
<dbReference type="BioMuta" id="OR6C6"/>
<dbReference type="jPOST" id="A6NF89"/>
<dbReference type="PaxDb" id="9606-ENSP00000351211"/>
<dbReference type="ProteomicsDB" id="1032"/>
<dbReference type="Antibodypedia" id="63422">
    <property type="antibodies" value="35 antibodies from 14 providers"/>
</dbReference>
<dbReference type="DNASU" id="283365"/>
<dbReference type="Ensembl" id="ENST00000358433.3">
    <property type="protein sequence ID" value="ENSP00000351211.2"/>
    <property type="gene ID" value="ENSG00000188324.4"/>
</dbReference>
<dbReference type="GeneID" id="283365"/>
<dbReference type="KEGG" id="hsa:283365"/>
<dbReference type="MANE-Select" id="ENST00000358433.3">
    <property type="protein sequence ID" value="ENSP00000351211.2"/>
    <property type="RefSeq nucleotide sequence ID" value="NM_001005493.2"/>
    <property type="RefSeq protein sequence ID" value="NP_001005493.1"/>
</dbReference>
<dbReference type="UCSC" id="uc010sph.2">
    <property type="organism name" value="human"/>
</dbReference>
<dbReference type="AGR" id="HGNC:31293"/>
<dbReference type="CTD" id="283365"/>
<dbReference type="GeneCards" id="OR6C6"/>
<dbReference type="HGNC" id="HGNC:31293">
    <property type="gene designation" value="OR6C6"/>
</dbReference>
<dbReference type="HPA" id="ENSG00000188324">
    <property type="expression patterns" value="Not detected"/>
</dbReference>
<dbReference type="neXtProt" id="NX_A6NF89"/>
<dbReference type="PharmGKB" id="PA134937223"/>
<dbReference type="VEuPathDB" id="HostDB:ENSG00000188324"/>
<dbReference type="eggNOG" id="ENOG502T9ME">
    <property type="taxonomic scope" value="Eukaryota"/>
</dbReference>
<dbReference type="GeneTree" id="ENSGT01130000278269"/>
<dbReference type="HOGENOM" id="CLU_012526_1_1_1"/>
<dbReference type="InParanoid" id="A6NF89"/>
<dbReference type="OMA" id="KTIDHFM"/>
<dbReference type="OrthoDB" id="9445202at2759"/>
<dbReference type="PAN-GO" id="A6NF89">
    <property type="GO annotations" value="1 GO annotation based on evolutionary models"/>
</dbReference>
<dbReference type="PhylomeDB" id="A6NF89"/>
<dbReference type="TreeFam" id="TF336833"/>
<dbReference type="PathwayCommons" id="A6NF89"/>
<dbReference type="Reactome" id="R-HSA-9752946">
    <property type="pathway name" value="Expression and translocation of olfactory receptors"/>
</dbReference>
<dbReference type="BioGRID-ORCS" id="283365">
    <property type="hits" value="29 hits in 712 CRISPR screens"/>
</dbReference>
<dbReference type="GenomeRNAi" id="283365"/>
<dbReference type="Pharos" id="A6NF89">
    <property type="development level" value="Tdark"/>
</dbReference>
<dbReference type="PRO" id="PR:A6NF89"/>
<dbReference type="Proteomes" id="UP000005640">
    <property type="component" value="Chromosome 12"/>
</dbReference>
<dbReference type="RNAct" id="A6NF89">
    <property type="molecule type" value="protein"/>
</dbReference>
<dbReference type="Bgee" id="ENSG00000188324">
    <property type="expression patterns" value="Expressed in male germ line stem cell (sensu Vertebrata) in testis"/>
</dbReference>
<dbReference type="ExpressionAtlas" id="A6NF89">
    <property type="expression patterns" value="baseline and differential"/>
</dbReference>
<dbReference type="GO" id="GO:0005811">
    <property type="term" value="C:lipid droplet"/>
    <property type="evidence" value="ECO:0000314"/>
    <property type="project" value="HPA"/>
</dbReference>
<dbReference type="GO" id="GO:0005886">
    <property type="term" value="C:plasma membrane"/>
    <property type="evidence" value="ECO:0000314"/>
    <property type="project" value="HPA"/>
</dbReference>
<dbReference type="GO" id="GO:0004930">
    <property type="term" value="F:G protein-coupled receptor activity"/>
    <property type="evidence" value="ECO:0007669"/>
    <property type="project" value="UniProtKB-KW"/>
</dbReference>
<dbReference type="GO" id="GO:0004984">
    <property type="term" value="F:olfactory receptor activity"/>
    <property type="evidence" value="ECO:0000318"/>
    <property type="project" value="GO_Central"/>
</dbReference>
<dbReference type="CDD" id="cd15912">
    <property type="entry name" value="7tmA_OR6C-like"/>
    <property type="match status" value="1"/>
</dbReference>
<dbReference type="FunFam" id="1.20.1070.10:FF:000013">
    <property type="entry name" value="Olfactory receptor"/>
    <property type="match status" value="1"/>
</dbReference>
<dbReference type="Gene3D" id="1.20.1070.10">
    <property type="entry name" value="Rhodopsin 7-helix transmembrane proteins"/>
    <property type="match status" value="1"/>
</dbReference>
<dbReference type="InterPro" id="IPR000276">
    <property type="entry name" value="GPCR_Rhodpsn"/>
</dbReference>
<dbReference type="InterPro" id="IPR017452">
    <property type="entry name" value="GPCR_Rhodpsn_7TM"/>
</dbReference>
<dbReference type="InterPro" id="IPR000725">
    <property type="entry name" value="Olfact_rcpt"/>
</dbReference>
<dbReference type="InterPro" id="IPR047132">
    <property type="entry name" value="Olfact_rcpt_6C-like"/>
</dbReference>
<dbReference type="PANTHER" id="PTHR26454">
    <property type="entry name" value="OLFACTORY RECEPTOR"/>
    <property type="match status" value="1"/>
</dbReference>
<dbReference type="PANTHER" id="PTHR26454:SF40">
    <property type="entry name" value="OLFACTORY RECEPTOR 6C6"/>
    <property type="match status" value="1"/>
</dbReference>
<dbReference type="Pfam" id="PF13853">
    <property type="entry name" value="7tm_4"/>
    <property type="match status" value="1"/>
</dbReference>
<dbReference type="PRINTS" id="PR00237">
    <property type="entry name" value="GPCRRHODOPSN"/>
</dbReference>
<dbReference type="PRINTS" id="PR00245">
    <property type="entry name" value="OLFACTORYR"/>
</dbReference>
<dbReference type="SUPFAM" id="SSF81321">
    <property type="entry name" value="Family A G protein-coupled receptor-like"/>
    <property type="match status" value="1"/>
</dbReference>
<dbReference type="PROSITE" id="PS00237">
    <property type="entry name" value="G_PROTEIN_RECEP_F1_1"/>
    <property type="match status" value="1"/>
</dbReference>
<dbReference type="PROSITE" id="PS50262">
    <property type="entry name" value="G_PROTEIN_RECEP_F1_2"/>
    <property type="match status" value="1"/>
</dbReference>
<keyword id="KW-1003">Cell membrane</keyword>
<keyword id="KW-1015">Disulfide bond</keyword>
<keyword id="KW-0297">G-protein coupled receptor</keyword>
<keyword id="KW-0325">Glycoprotein</keyword>
<keyword id="KW-0472">Membrane</keyword>
<keyword id="KW-0552">Olfaction</keyword>
<keyword id="KW-0675">Receptor</keyword>
<keyword id="KW-1185">Reference proteome</keyword>
<keyword id="KW-0716">Sensory transduction</keyword>
<keyword id="KW-0807">Transducer</keyword>
<keyword id="KW-0812">Transmembrane</keyword>
<keyword id="KW-1133">Transmembrane helix</keyword>
<accession>A6NF89</accession>
<reference key="1">
    <citation type="journal article" date="2006" name="Nature">
        <title>The finished DNA sequence of human chromosome 12.</title>
        <authorList>
            <person name="Scherer S.E."/>
            <person name="Muzny D.M."/>
            <person name="Buhay C.J."/>
            <person name="Chen R."/>
            <person name="Cree A."/>
            <person name="Ding Y."/>
            <person name="Dugan-Rocha S."/>
            <person name="Gill R."/>
            <person name="Gunaratne P."/>
            <person name="Harris R.A."/>
            <person name="Hawes A.C."/>
            <person name="Hernandez J."/>
            <person name="Hodgson A.V."/>
            <person name="Hume J."/>
            <person name="Jackson A."/>
            <person name="Khan Z.M."/>
            <person name="Kovar-Smith C."/>
            <person name="Lewis L.R."/>
            <person name="Lozado R.J."/>
            <person name="Metzker M.L."/>
            <person name="Milosavljevic A."/>
            <person name="Miner G.R."/>
            <person name="Montgomery K.T."/>
            <person name="Morgan M.B."/>
            <person name="Nazareth L.V."/>
            <person name="Scott G."/>
            <person name="Sodergren E."/>
            <person name="Song X.-Z."/>
            <person name="Steffen D."/>
            <person name="Lovering R.C."/>
            <person name="Wheeler D.A."/>
            <person name="Worley K.C."/>
            <person name="Yuan Y."/>
            <person name="Zhang Z."/>
            <person name="Adams C.Q."/>
            <person name="Ansari-Lari M.A."/>
            <person name="Ayele M."/>
            <person name="Brown M.J."/>
            <person name="Chen G."/>
            <person name="Chen Z."/>
            <person name="Clerc-Blankenburg K.P."/>
            <person name="Davis C."/>
            <person name="Delgado O."/>
            <person name="Dinh H.H."/>
            <person name="Draper H."/>
            <person name="Gonzalez-Garay M.L."/>
            <person name="Havlak P."/>
            <person name="Jackson L.R."/>
            <person name="Jacob L.S."/>
            <person name="Kelly S.H."/>
            <person name="Li L."/>
            <person name="Li Z."/>
            <person name="Liu J."/>
            <person name="Liu W."/>
            <person name="Lu J."/>
            <person name="Maheshwari M."/>
            <person name="Nguyen B.-V."/>
            <person name="Okwuonu G.O."/>
            <person name="Pasternak S."/>
            <person name="Perez L.M."/>
            <person name="Plopper F.J.H."/>
            <person name="Santibanez J."/>
            <person name="Shen H."/>
            <person name="Tabor P.E."/>
            <person name="Verduzco D."/>
            <person name="Waldron L."/>
            <person name="Wang Q."/>
            <person name="Williams G.A."/>
            <person name="Zhang J."/>
            <person name="Zhou J."/>
            <person name="Allen C.C."/>
            <person name="Amin A.G."/>
            <person name="Anyalebechi V."/>
            <person name="Bailey M."/>
            <person name="Barbaria J.A."/>
            <person name="Bimage K.E."/>
            <person name="Bryant N.P."/>
            <person name="Burch P.E."/>
            <person name="Burkett C.E."/>
            <person name="Burrell K.L."/>
            <person name="Calderon E."/>
            <person name="Cardenas V."/>
            <person name="Carter K."/>
            <person name="Casias K."/>
            <person name="Cavazos I."/>
            <person name="Cavazos S.R."/>
            <person name="Ceasar H."/>
            <person name="Chacko J."/>
            <person name="Chan S.N."/>
            <person name="Chavez D."/>
            <person name="Christopoulos C."/>
            <person name="Chu J."/>
            <person name="Cockrell R."/>
            <person name="Cox C.D."/>
            <person name="Dang M."/>
            <person name="Dathorne S.R."/>
            <person name="David R."/>
            <person name="Davis C.M."/>
            <person name="Davy-Carroll L."/>
            <person name="Deshazo D.R."/>
            <person name="Donlin J.E."/>
            <person name="D'Souza L."/>
            <person name="Eaves K.A."/>
            <person name="Egan A."/>
            <person name="Emery-Cohen A.J."/>
            <person name="Escotto M."/>
            <person name="Flagg N."/>
            <person name="Forbes L.D."/>
            <person name="Gabisi A.M."/>
            <person name="Garza M."/>
            <person name="Hamilton C."/>
            <person name="Henderson N."/>
            <person name="Hernandez O."/>
            <person name="Hines S."/>
            <person name="Hogues M.E."/>
            <person name="Huang M."/>
            <person name="Idlebird D.G."/>
            <person name="Johnson R."/>
            <person name="Jolivet A."/>
            <person name="Jones S."/>
            <person name="Kagan R."/>
            <person name="King L.M."/>
            <person name="Leal B."/>
            <person name="Lebow H."/>
            <person name="Lee S."/>
            <person name="LeVan J.M."/>
            <person name="Lewis L.C."/>
            <person name="London P."/>
            <person name="Lorensuhewa L.M."/>
            <person name="Loulseged H."/>
            <person name="Lovett D.A."/>
            <person name="Lucier A."/>
            <person name="Lucier R.L."/>
            <person name="Ma J."/>
            <person name="Madu R.C."/>
            <person name="Mapua P."/>
            <person name="Martindale A.D."/>
            <person name="Martinez E."/>
            <person name="Massey E."/>
            <person name="Mawhiney S."/>
            <person name="Meador M.G."/>
            <person name="Mendez S."/>
            <person name="Mercado C."/>
            <person name="Mercado I.C."/>
            <person name="Merritt C.E."/>
            <person name="Miner Z.L."/>
            <person name="Minja E."/>
            <person name="Mitchell T."/>
            <person name="Mohabbat F."/>
            <person name="Mohabbat K."/>
            <person name="Montgomery B."/>
            <person name="Moore N."/>
            <person name="Morris S."/>
            <person name="Munidasa M."/>
            <person name="Ngo R.N."/>
            <person name="Nguyen N.B."/>
            <person name="Nickerson E."/>
            <person name="Nwaokelemeh O.O."/>
            <person name="Nwokenkwo S."/>
            <person name="Obregon M."/>
            <person name="Oguh M."/>
            <person name="Oragunye N."/>
            <person name="Oviedo R.J."/>
            <person name="Parish B.J."/>
            <person name="Parker D.N."/>
            <person name="Parrish J."/>
            <person name="Parks K.L."/>
            <person name="Paul H.A."/>
            <person name="Payton B.A."/>
            <person name="Perez A."/>
            <person name="Perrin W."/>
            <person name="Pickens A."/>
            <person name="Primus E.L."/>
            <person name="Pu L.-L."/>
            <person name="Puazo M."/>
            <person name="Quiles M.M."/>
            <person name="Quiroz J.B."/>
            <person name="Rabata D."/>
            <person name="Reeves K."/>
            <person name="Ruiz S.J."/>
            <person name="Shao H."/>
            <person name="Sisson I."/>
            <person name="Sonaike T."/>
            <person name="Sorelle R.P."/>
            <person name="Sutton A.E."/>
            <person name="Svatek A.F."/>
            <person name="Svetz L.A."/>
            <person name="Tamerisa K.S."/>
            <person name="Taylor T.R."/>
            <person name="Teague B."/>
            <person name="Thomas N."/>
            <person name="Thorn R.D."/>
            <person name="Trejos Z.Y."/>
            <person name="Trevino B.K."/>
            <person name="Ukegbu O.N."/>
            <person name="Urban J.B."/>
            <person name="Vasquez L.I."/>
            <person name="Vera V.A."/>
            <person name="Villasana D.M."/>
            <person name="Wang L."/>
            <person name="Ward-Moore S."/>
            <person name="Warren J.T."/>
            <person name="Wei X."/>
            <person name="White F."/>
            <person name="Williamson A.L."/>
            <person name="Wleczyk R."/>
            <person name="Wooden H.S."/>
            <person name="Wooden S.H."/>
            <person name="Yen J."/>
            <person name="Yoon L."/>
            <person name="Yoon V."/>
            <person name="Zorrilla S.E."/>
            <person name="Nelson D."/>
            <person name="Kucherlapati R."/>
            <person name="Weinstock G."/>
            <person name="Gibbs R.A."/>
        </authorList>
    </citation>
    <scope>NUCLEOTIDE SEQUENCE [LARGE SCALE GENOMIC DNA]</scope>
</reference>
<feature type="chain" id="PRO_0000310457" description="Olfactory receptor 6C6">
    <location>
        <begin position="1"/>
        <end position="314"/>
    </location>
</feature>
<feature type="topological domain" description="Extracellular" evidence="1">
    <location>
        <begin position="1"/>
        <end position="24"/>
    </location>
</feature>
<feature type="transmembrane region" description="Helical; Name=1" evidence="1">
    <location>
        <begin position="25"/>
        <end position="45"/>
    </location>
</feature>
<feature type="topological domain" description="Cytoplasmic" evidence="1">
    <location>
        <begin position="46"/>
        <end position="63"/>
    </location>
</feature>
<feature type="transmembrane region" description="Helical; Name=2" evidence="1">
    <location>
        <begin position="64"/>
        <end position="84"/>
    </location>
</feature>
<feature type="topological domain" description="Extracellular" evidence="1">
    <location>
        <begin position="85"/>
        <end position="95"/>
    </location>
</feature>
<feature type="transmembrane region" description="Helical; Name=3" evidence="1">
    <location>
        <begin position="96"/>
        <end position="116"/>
    </location>
</feature>
<feature type="topological domain" description="Cytoplasmic" evidence="1">
    <location>
        <begin position="117"/>
        <end position="141"/>
    </location>
</feature>
<feature type="transmembrane region" description="Helical; Name=4" evidence="1">
    <location>
        <begin position="142"/>
        <end position="162"/>
    </location>
</feature>
<feature type="topological domain" description="Extracellular" evidence="1">
    <location>
        <begin position="163"/>
        <end position="199"/>
    </location>
</feature>
<feature type="transmembrane region" description="Helical; Name=5" evidence="1">
    <location>
        <begin position="200"/>
        <end position="220"/>
    </location>
</feature>
<feature type="topological domain" description="Cytoplasmic" evidence="1">
    <location>
        <begin position="221"/>
        <end position="237"/>
    </location>
</feature>
<feature type="transmembrane region" description="Helical; Name=6" evidence="1">
    <location>
        <begin position="238"/>
        <end position="258"/>
    </location>
</feature>
<feature type="topological domain" description="Extracellular" evidence="1">
    <location>
        <begin position="259"/>
        <end position="269"/>
    </location>
</feature>
<feature type="transmembrane region" description="Helical; Name=7" evidence="1">
    <location>
        <begin position="270"/>
        <end position="290"/>
    </location>
</feature>
<feature type="topological domain" description="Cytoplasmic" evidence="1">
    <location>
        <begin position="291"/>
        <end position="314"/>
    </location>
</feature>
<feature type="glycosylation site" description="N-linked (GlcNAc...) asparagine" evidence="1">
    <location>
        <position position="3"/>
    </location>
</feature>
<feature type="disulfide bond" evidence="2">
    <location>
        <begin position="95"/>
        <end position="177"/>
    </location>
</feature>
<feature type="sequence variant" id="VAR_037048" description="In dbSNP:rs11171402.">
    <original>T</original>
    <variation>I</variation>
    <location>
        <position position="190"/>
    </location>
</feature>
<protein>
    <recommendedName>
        <fullName>Olfactory receptor 6C6</fullName>
    </recommendedName>
</protein>
<comment type="function">
    <text evidence="3">Odorant receptor.</text>
</comment>
<comment type="subcellular location">
    <subcellularLocation>
        <location>Cell membrane</location>
        <topology>Multi-pass membrane protein</topology>
    </subcellularLocation>
</comment>
<comment type="similarity">
    <text evidence="2">Belongs to the G-protein coupled receptor 1 family.</text>
</comment>
<comment type="online information" name="Human Olfactory Receptor Data Exploratorium (HORDE)">
    <link uri="http://genome.weizmann.ac.il/horde/card/index/symbol:OR6C6"/>
</comment>
<gene>
    <name type="primary">OR6C6</name>
</gene>
<evidence type="ECO:0000255" key="1"/>
<evidence type="ECO:0000255" key="2">
    <source>
        <dbReference type="PROSITE-ProRule" id="PRU00521"/>
    </source>
</evidence>
<evidence type="ECO:0000305" key="3"/>
<organism>
    <name type="scientific">Homo sapiens</name>
    <name type="common">Human</name>
    <dbReference type="NCBI Taxonomy" id="9606"/>
    <lineage>
        <taxon>Eukaryota</taxon>
        <taxon>Metazoa</taxon>
        <taxon>Chordata</taxon>
        <taxon>Craniata</taxon>
        <taxon>Vertebrata</taxon>
        <taxon>Euteleostomi</taxon>
        <taxon>Mammalia</taxon>
        <taxon>Eutheria</taxon>
        <taxon>Euarchontoglires</taxon>
        <taxon>Primates</taxon>
        <taxon>Haplorrhini</taxon>
        <taxon>Catarrhini</taxon>
        <taxon>Hominidae</taxon>
        <taxon>Homo</taxon>
    </lineage>
</organism>